<keyword id="KW-0106">Calcium</keyword>
<keyword id="KW-0119">Carbohydrate metabolism</keyword>
<keyword id="KW-0961">Cell wall biogenesis/degradation</keyword>
<keyword id="KW-0456">Lyase</keyword>
<keyword id="KW-0479">Metal-binding</keyword>
<keyword id="KW-0624">Polysaccharide degradation</keyword>
<keyword id="KW-1185">Reference proteome</keyword>
<keyword id="KW-0964">Secreted</keyword>
<keyword id="KW-0732">Signal</keyword>
<reference key="1">
    <citation type="submission" date="2005-09" db="EMBL/GenBank/DDBJ databases">
        <title>Annotation of the Aspergillus terreus NIH2624 genome.</title>
        <authorList>
            <person name="Birren B.W."/>
            <person name="Lander E.S."/>
            <person name="Galagan J.E."/>
            <person name="Nusbaum C."/>
            <person name="Devon K."/>
            <person name="Henn M."/>
            <person name="Ma L.-J."/>
            <person name="Jaffe D.B."/>
            <person name="Butler J."/>
            <person name="Alvarez P."/>
            <person name="Gnerre S."/>
            <person name="Grabherr M."/>
            <person name="Kleber M."/>
            <person name="Mauceli E.W."/>
            <person name="Brockman W."/>
            <person name="Rounsley S."/>
            <person name="Young S.K."/>
            <person name="LaButti K."/>
            <person name="Pushparaj V."/>
            <person name="DeCaprio D."/>
            <person name="Crawford M."/>
            <person name="Koehrsen M."/>
            <person name="Engels R."/>
            <person name="Montgomery P."/>
            <person name="Pearson M."/>
            <person name="Howarth C."/>
            <person name="Larson L."/>
            <person name="Luoma S."/>
            <person name="White J."/>
            <person name="Alvarado L."/>
            <person name="Kodira C.D."/>
            <person name="Zeng Q."/>
            <person name="Oleary S."/>
            <person name="Yandava C."/>
            <person name="Denning D.W."/>
            <person name="Nierman W.C."/>
            <person name="Milne T."/>
            <person name="Madden K."/>
        </authorList>
    </citation>
    <scope>NUCLEOTIDE SEQUENCE [LARGE SCALE GENOMIC DNA]</scope>
    <source>
        <strain>NIH 2624 / FGSC A1156</strain>
    </source>
</reference>
<proteinExistence type="inferred from homology"/>
<accession>Q0CBV0</accession>
<evidence type="ECO:0000250" key="1"/>
<evidence type="ECO:0000255" key="2"/>
<evidence type="ECO:0000305" key="3"/>
<comment type="function">
    <text evidence="1">Pectinolytic enzyme consist of four classes of enzymes: pectin lyase, polygalacturonase, pectin methylesterase and rhamnogalacturonase. Among pectinolytic enzymes, pectin lyase is the most important in depolymerization of pectin, since it cleaves internal glycosidic bonds of highly methylated pectins. Favors pectate, the anion, over pectin, the methyl ester (By similarity).</text>
</comment>
<comment type="catalytic activity">
    <reaction>
        <text>Eliminative cleavage of (1-&gt;4)-alpha-D-galacturonan to give oligosaccharides with 4-deoxy-alpha-D-galact-4-enuronosyl groups at their non-reducing ends.</text>
        <dbReference type="EC" id="4.2.2.2"/>
    </reaction>
</comment>
<comment type="cofactor">
    <cofactor evidence="1">
        <name>Ca(2+)</name>
        <dbReference type="ChEBI" id="CHEBI:29108"/>
    </cofactor>
    <text evidence="1">Binds 1 Ca(2+) ion per subunit.</text>
</comment>
<comment type="subcellular location">
    <subcellularLocation>
        <location evidence="1">Secreted</location>
    </subcellularLocation>
</comment>
<comment type="similarity">
    <text evidence="3">Belongs to the polysaccharide lyase 1 family.</text>
</comment>
<feature type="signal peptide" evidence="2">
    <location>
        <begin position="1"/>
        <end position="15"/>
    </location>
</feature>
<feature type="chain" id="PRO_0000394567" description="Probable pectate lyase B">
    <location>
        <begin position="16"/>
        <end position="325"/>
    </location>
</feature>
<feature type="active site" evidence="2">
    <location>
        <position position="218"/>
    </location>
</feature>
<feature type="binding site" evidence="1">
    <location>
        <position position="132"/>
    </location>
    <ligand>
        <name>Ca(2+)</name>
        <dbReference type="ChEBI" id="CHEBI:29108"/>
    </ligand>
</feature>
<feature type="binding site" evidence="1">
    <location>
        <position position="161"/>
    </location>
    <ligand>
        <name>Ca(2+)</name>
        <dbReference type="ChEBI" id="CHEBI:29108"/>
    </ligand>
</feature>
<feature type="binding site" evidence="1">
    <location>
        <position position="165"/>
    </location>
    <ligand>
        <name>Ca(2+)</name>
        <dbReference type="ChEBI" id="CHEBI:29108"/>
    </ligand>
</feature>
<sequence>MRLPTLFMLAAIATASPMSDLNRREMTRRQAAESCPIGYCTQNGGTTGGTAGDTVTVTDLAGLTEAAENETPLTIIVSGAISGSAKIRVASDKTIYGETGSSITGVGFYIRRVSNVIMRNLKIGQVDADNGDAIGIDESTNVWVDHCDLSGDLSAGKDDLDGLLDITHGAEWITVSNTYFHDHWKGSLIGHSDSNEGEDLGHLHITYANNYWYNVNSRTPSIRFGTVHIINNYWDNLLLTGVNCRMDAQVLVQSSAFSNCPDEAIFFADSDYTGYAVVDDVDLGGSTNSVPEGTLTPSSLPYDAIEAIGSAQIATTIPGTAGQKL</sequence>
<gene>
    <name type="primary">plyB</name>
    <name type="ORF">ATEG_08834</name>
</gene>
<organism>
    <name type="scientific">Aspergillus terreus (strain NIH 2624 / FGSC A1156)</name>
    <dbReference type="NCBI Taxonomy" id="341663"/>
    <lineage>
        <taxon>Eukaryota</taxon>
        <taxon>Fungi</taxon>
        <taxon>Dikarya</taxon>
        <taxon>Ascomycota</taxon>
        <taxon>Pezizomycotina</taxon>
        <taxon>Eurotiomycetes</taxon>
        <taxon>Eurotiomycetidae</taxon>
        <taxon>Eurotiales</taxon>
        <taxon>Aspergillaceae</taxon>
        <taxon>Aspergillus</taxon>
        <taxon>Aspergillus subgen. Circumdati</taxon>
    </lineage>
</organism>
<protein>
    <recommendedName>
        <fullName>Probable pectate lyase B</fullName>
        <ecNumber>4.2.2.2</ecNumber>
    </recommendedName>
</protein>
<dbReference type="EC" id="4.2.2.2"/>
<dbReference type="EMBL" id="CH476606">
    <property type="protein sequence ID" value="EAU30966.1"/>
    <property type="molecule type" value="Genomic_DNA"/>
</dbReference>
<dbReference type="RefSeq" id="XP_001217420.1">
    <property type="nucleotide sequence ID" value="XM_001217419.1"/>
</dbReference>
<dbReference type="SMR" id="Q0CBV0"/>
<dbReference type="STRING" id="341663.Q0CBV0"/>
<dbReference type="EnsemblFungi" id="EAU30966">
    <property type="protein sequence ID" value="EAU30966"/>
    <property type="gene ID" value="ATEG_08834"/>
</dbReference>
<dbReference type="GeneID" id="4323471"/>
<dbReference type="VEuPathDB" id="FungiDB:ATEG_08834"/>
<dbReference type="eggNOG" id="ENOG502S66G">
    <property type="taxonomic scope" value="Eukaryota"/>
</dbReference>
<dbReference type="HOGENOM" id="CLU_021894_1_0_1"/>
<dbReference type="OMA" id="LVNNYWD"/>
<dbReference type="OrthoDB" id="1637350at2759"/>
<dbReference type="Proteomes" id="UP000007963">
    <property type="component" value="Unassembled WGS sequence"/>
</dbReference>
<dbReference type="GO" id="GO:0005576">
    <property type="term" value="C:extracellular region"/>
    <property type="evidence" value="ECO:0007669"/>
    <property type="project" value="UniProtKB-SubCell"/>
</dbReference>
<dbReference type="GO" id="GO:0046872">
    <property type="term" value="F:metal ion binding"/>
    <property type="evidence" value="ECO:0007669"/>
    <property type="project" value="UniProtKB-KW"/>
</dbReference>
<dbReference type="GO" id="GO:0030570">
    <property type="term" value="F:pectate lyase activity"/>
    <property type="evidence" value="ECO:0007669"/>
    <property type="project" value="UniProtKB-EC"/>
</dbReference>
<dbReference type="GO" id="GO:0071555">
    <property type="term" value="P:cell wall organization"/>
    <property type="evidence" value="ECO:0007669"/>
    <property type="project" value="UniProtKB-KW"/>
</dbReference>
<dbReference type="GO" id="GO:0000272">
    <property type="term" value="P:polysaccharide catabolic process"/>
    <property type="evidence" value="ECO:0007669"/>
    <property type="project" value="UniProtKB-KW"/>
</dbReference>
<dbReference type="FunFam" id="2.160.20.10:FF:000036">
    <property type="entry name" value="Pectate lyase A"/>
    <property type="match status" value="1"/>
</dbReference>
<dbReference type="Gene3D" id="2.160.20.10">
    <property type="entry name" value="Single-stranded right-handed beta-helix, Pectin lyase-like"/>
    <property type="match status" value="1"/>
</dbReference>
<dbReference type="InterPro" id="IPR002022">
    <property type="entry name" value="Pec_lyase"/>
</dbReference>
<dbReference type="InterPro" id="IPR012334">
    <property type="entry name" value="Pectin_lyas_fold"/>
</dbReference>
<dbReference type="InterPro" id="IPR011050">
    <property type="entry name" value="Pectin_lyase_fold/virulence"/>
</dbReference>
<dbReference type="InterPro" id="IPR045032">
    <property type="entry name" value="PEL"/>
</dbReference>
<dbReference type="PANTHER" id="PTHR31683">
    <property type="entry name" value="PECTATE LYASE 18-RELATED"/>
    <property type="match status" value="1"/>
</dbReference>
<dbReference type="PANTHER" id="PTHR31683:SF18">
    <property type="entry name" value="PECTATE LYASE 21-RELATED"/>
    <property type="match status" value="1"/>
</dbReference>
<dbReference type="Pfam" id="PF00544">
    <property type="entry name" value="Pectate_lyase_4"/>
    <property type="match status" value="1"/>
</dbReference>
<dbReference type="SMART" id="SM00656">
    <property type="entry name" value="Amb_all"/>
    <property type="match status" value="1"/>
</dbReference>
<dbReference type="SUPFAM" id="SSF51126">
    <property type="entry name" value="Pectin lyase-like"/>
    <property type="match status" value="1"/>
</dbReference>
<name>PLYB_ASPTN</name>